<sequence>MAEVQKDAPIKSVQVEALVVMKIVKHCSTSFPTVATGSIVGMDNNGAIEVTNSFQFPSVDVSSSDSHSDASSLAAAAPRAKANIVYQNEMIRHLKEVNVDANNVGWYTSATMGNFINMSFIENQYHYQKENEKTVALVHDVSRSSQGALSLRAFKLSPEFMTAYKEAKFTTESLRNSKLTYKDIFVELPVNVHNSHLLTSFLHQIPAPPKSAEIPMPASLDDIRRDPVQIPAHPGFESLDLSIDPFLEKTCDLLLDSIESHYTDLNNHQYYQRQLTREQFKITQWQAKRKAENAARLAAKQSPLPEDEWQRLFKLPQEPSRLEGMLNARQVDQYARQVDAFTANITAKMFAVRGNLLPE</sequence>
<name>EIF3H_NEUCR</name>
<protein>
    <recommendedName>
        <fullName evidence="1">Eukaryotic translation initiation factor 3 subunit H</fullName>
        <shortName evidence="1">eIF3h</shortName>
    </recommendedName>
</protein>
<reference key="1">
    <citation type="journal article" date="2003" name="Nature">
        <title>The genome sequence of the filamentous fungus Neurospora crassa.</title>
        <authorList>
            <person name="Galagan J.E."/>
            <person name="Calvo S.E."/>
            <person name="Borkovich K.A."/>
            <person name="Selker E.U."/>
            <person name="Read N.D."/>
            <person name="Jaffe D.B."/>
            <person name="FitzHugh W."/>
            <person name="Ma L.-J."/>
            <person name="Smirnov S."/>
            <person name="Purcell S."/>
            <person name="Rehman B."/>
            <person name="Elkins T."/>
            <person name="Engels R."/>
            <person name="Wang S."/>
            <person name="Nielsen C.B."/>
            <person name="Butler J."/>
            <person name="Endrizzi M."/>
            <person name="Qui D."/>
            <person name="Ianakiev P."/>
            <person name="Bell-Pedersen D."/>
            <person name="Nelson M.A."/>
            <person name="Werner-Washburne M."/>
            <person name="Selitrennikoff C.P."/>
            <person name="Kinsey J.A."/>
            <person name="Braun E.L."/>
            <person name="Zelter A."/>
            <person name="Schulte U."/>
            <person name="Kothe G.O."/>
            <person name="Jedd G."/>
            <person name="Mewes H.-W."/>
            <person name="Staben C."/>
            <person name="Marcotte E."/>
            <person name="Greenberg D."/>
            <person name="Roy A."/>
            <person name="Foley K."/>
            <person name="Naylor J."/>
            <person name="Stange-Thomann N."/>
            <person name="Barrett R."/>
            <person name="Gnerre S."/>
            <person name="Kamal M."/>
            <person name="Kamvysselis M."/>
            <person name="Mauceli E.W."/>
            <person name="Bielke C."/>
            <person name="Rudd S."/>
            <person name="Frishman D."/>
            <person name="Krystofova S."/>
            <person name="Rasmussen C."/>
            <person name="Metzenberg R.L."/>
            <person name="Perkins D.D."/>
            <person name="Kroken S."/>
            <person name="Cogoni C."/>
            <person name="Macino G."/>
            <person name="Catcheside D.E.A."/>
            <person name="Li W."/>
            <person name="Pratt R.J."/>
            <person name="Osmani S.A."/>
            <person name="DeSouza C.P.C."/>
            <person name="Glass N.L."/>
            <person name="Orbach M.J."/>
            <person name="Berglund J.A."/>
            <person name="Voelker R."/>
            <person name="Yarden O."/>
            <person name="Plamann M."/>
            <person name="Seiler S."/>
            <person name="Dunlap J.C."/>
            <person name="Radford A."/>
            <person name="Aramayo R."/>
            <person name="Natvig D.O."/>
            <person name="Alex L.A."/>
            <person name="Mannhaupt G."/>
            <person name="Ebbole D.J."/>
            <person name="Freitag M."/>
            <person name="Paulsen I."/>
            <person name="Sachs M.S."/>
            <person name="Lander E.S."/>
            <person name="Nusbaum C."/>
            <person name="Birren B.W."/>
        </authorList>
    </citation>
    <scope>NUCLEOTIDE SEQUENCE [LARGE SCALE GENOMIC DNA]</scope>
    <source>
        <strain>ATCC 24698 / 74-OR23-1A / CBS 708.71 / DSM 1257 / FGSC 987</strain>
    </source>
</reference>
<comment type="function">
    <text evidence="1">Component of the eukaryotic translation initiation factor 3 (eIF-3) complex, which is involved in protein synthesis of a specialized repertoire of mRNAs and, together with other initiation factors, stimulates binding of mRNA and methionyl-tRNAi to the 40S ribosome. The eIF-3 complex specifically targets and initiates translation of a subset of mRNAs involved in cell proliferation.</text>
</comment>
<comment type="subunit">
    <text evidence="1">Component of the eukaryotic translation initiation factor 3 (eIF-3) complex.</text>
</comment>
<comment type="subcellular location">
    <subcellularLocation>
        <location evidence="1">Cytoplasm</location>
    </subcellularLocation>
</comment>
<comment type="similarity">
    <text evidence="1">Belongs to the eIF-3 subunit H family.</text>
</comment>
<evidence type="ECO:0000255" key="1">
    <source>
        <dbReference type="HAMAP-Rule" id="MF_03007"/>
    </source>
</evidence>
<evidence type="ECO:0000255" key="2">
    <source>
        <dbReference type="PROSITE-ProRule" id="PRU01182"/>
    </source>
</evidence>
<proteinExistence type="inferred from homology"/>
<dbReference type="EMBL" id="CM002239">
    <property type="protein sequence ID" value="EAA33209.1"/>
    <property type="molecule type" value="Genomic_DNA"/>
</dbReference>
<dbReference type="RefSeq" id="XP_962445.1">
    <property type="nucleotide sequence ID" value="XM_957352.3"/>
</dbReference>
<dbReference type="SMR" id="Q7S9Y9"/>
<dbReference type="STRING" id="367110.Q7S9Y9"/>
<dbReference type="PaxDb" id="5141-EFNCRP00000008208"/>
<dbReference type="EnsemblFungi" id="EAA33209">
    <property type="protein sequence ID" value="EAA33209"/>
    <property type="gene ID" value="NCU07929"/>
</dbReference>
<dbReference type="GeneID" id="3878577"/>
<dbReference type="KEGG" id="ncr:NCU07929"/>
<dbReference type="VEuPathDB" id="FungiDB:NCU07929"/>
<dbReference type="HOGENOM" id="CLU_044094_1_0_1"/>
<dbReference type="InParanoid" id="Q7S9Y9"/>
<dbReference type="OMA" id="WYQSTYF"/>
<dbReference type="OrthoDB" id="10265695at2759"/>
<dbReference type="Proteomes" id="UP000001805">
    <property type="component" value="Chromosome 4, Linkage Group IV"/>
</dbReference>
<dbReference type="GO" id="GO:0016282">
    <property type="term" value="C:eukaryotic 43S preinitiation complex"/>
    <property type="evidence" value="ECO:0000318"/>
    <property type="project" value="GO_Central"/>
</dbReference>
<dbReference type="GO" id="GO:0033290">
    <property type="term" value="C:eukaryotic 48S preinitiation complex"/>
    <property type="evidence" value="ECO:0007669"/>
    <property type="project" value="UniProtKB-UniRule"/>
</dbReference>
<dbReference type="GO" id="GO:0005852">
    <property type="term" value="C:eukaryotic translation initiation factor 3 complex"/>
    <property type="evidence" value="ECO:0000318"/>
    <property type="project" value="GO_Central"/>
</dbReference>
<dbReference type="GO" id="GO:0008237">
    <property type="term" value="F:metallopeptidase activity"/>
    <property type="evidence" value="ECO:0000318"/>
    <property type="project" value="GO_Central"/>
</dbReference>
<dbReference type="GO" id="GO:0003743">
    <property type="term" value="F:translation initiation factor activity"/>
    <property type="evidence" value="ECO:0007669"/>
    <property type="project" value="UniProtKB-UniRule"/>
</dbReference>
<dbReference type="GO" id="GO:0001732">
    <property type="term" value="P:formation of cytoplasmic translation initiation complex"/>
    <property type="evidence" value="ECO:0007669"/>
    <property type="project" value="UniProtKB-UniRule"/>
</dbReference>
<dbReference type="GO" id="GO:0006413">
    <property type="term" value="P:translational initiation"/>
    <property type="evidence" value="ECO:0000318"/>
    <property type="project" value="GO_Central"/>
</dbReference>
<dbReference type="CDD" id="cd08065">
    <property type="entry name" value="MPN_eIF3h"/>
    <property type="match status" value="1"/>
</dbReference>
<dbReference type="FunFam" id="3.40.140.10:FF:000052">
    <property type="entry name" value="Eukaryotic translation initiation factor 3 subunit H"/>
    <property type="match status" value="1"/>
</dbReference>
<dbReference type="Gene3D" id="3.40.140.10">
    <property type="entry name" value="Cytidine Deaminase, domain 2"/>
    <property type="match status" value="1"/>
</dbReference>
<dbReference type="HAMAP" id="MF_03007">
    <property type="entry name" value="eIF3h"/>
    <property type="match status" value="1"/>
</dbReference>
<dbReference type="InterPro" id="IPR027524">
    <property type="entry name" value="eIF3h"/>
</dbReference>
<dbReference type="InterPro" id="IPR045810">
    <property type="entry name" value="eIF3h_C"/>
</dbReference>
<dbReference type="InterPro" id="IPR000555">
    <property type="entry name" value="JAMM/MPN+_dom"/>
</dbReference>
<dbReference type="InterPro" id="IPR050242">
    <property type="entry name" value="JAMM_MPN+_peptidase_M67A"/>
</dbReference>
<dbReference type="InterPro" id="IPR037518">
    <property type="entry name" value="MPN"/>
</dbReference>
<dbReference type="PANTHER" id="PTHR10410">
    <property type="entry name" value="EUKARYOTIC TRANSLATION INITIATION FACTOR 3 -RELATED"/>
    <property type="match status" value="1"/>
</dbReference>
<dbReference type="Pfam" id="PF19445">
    <property type="entry name" value="eIF3h_C"/>
    <property type="match status" value="2"/>
</dbReference>
<dbReference type="Pfam" id="PF01398">
    <property type="entry name" value="JAB"/>
    <property type="match status" value="1"/>
</dbReference>
<dbReference type="SMART" id="SM00232">
    <property type="entry name" value="JAB_MPN"/>
    <property type="match status" value="1"/>
</dbReference>
<dbReference type="PROSITE" id="PS50249">
    <property type="entry name" value="MPN"/>
    <property type="match status" value="1"/>
</dbReference>
<feature type="chain" id="PRO_0000365210" description="Eukaryotic translation initiation factor 3 subunit H">
    <location>
        <begin position="1"/>
        <end position="359"/>
    </location>
</feature>
<feature type="domain" description="MPN" evidence="2">
    <location>
        <begin position="13"/>
        <end position="160"/>
    </location>
</feature>
<organism>
    <name type="scientific">Neurospora crassa (strain ATCC 24698 / 74-OR23-1A / CBS 708.71 / DSM 1257 / FGSC 987)</name>
    <dbReference type="NCBI Taxonomy" id="367110"/>
    <lineage>
        <taxon>Eukaryota</taxon>
        <taxon>Fungi</taxon>
        <taxon>Dikarya</taxon>
        <taxon>Ascomycota</taxon>
        <taxon>Pezizomycotina</taxon>
        <taxon>Sordariomycetes</taxon>
        <taxon>Sordariomycetidae</taxon>
        <taxon>Sordariales</taxon>
        <taxon>Sordariaceae</taxon>
        <taxon>Neurospora</taxon>
    </lineage>
</organism>
<keyword id="KW-0963">Cytoplasm</keyword>
<keyword id="KW-0396">Initiation factor</keyword>
<keyword id="KW-0648">Protein biosynthesis</keyword>
<keyword id="KW-1185">Reference proteome</keyword>
<accession>Q7S9Y9</accession>
<gene>
    <name type="primary">eif3h</name>
    <name type="ORF">NCU07929</name>
</gene>